<sequence length="101" mass="11674">MDIKIIKDKKNPLLNRRELDFIVKYEGSTPSRNDVRNKLAAMLNAPLELLVIQRIKTEYGMQESKGYAKLYEDADRMKQVEQEYVLKRNAVPGSETEGEEA</sequence>
<name>RS24_METMA</name>
<feature type="chain" id="PRO_0000137645" description="Small ribosomal subunit protein eS24">
    <location>
        <begin position="1"/>
        <end position="101"/>
    </location>
</feature>
<feature type="strand" evidence="3">
    <location>
        <begin position="2"/>
        <end position="11"/>
    </location>
</feature>
<feature type="turn" evidence="3">
    <location>
        <begin position="12"/>
        <end position="15"/>
    </location>
</feature>
<feature type="strand" evidence="3">
    <location>
        <begin position="16"/>
        <end position="24"/>
    </location>
</feature>
<feature type="strand" evidence="3">
    <location>
        <begin position="26"/>
        <end position="28"/>
    </location>
</feature>
<feature type="helix" evidence="3">
    <location>
        <begin position="32"/>
        <end position="42"/>
    </location>
</feature>
<feature type="turn" evidence="3">
    <location>
        <begin position="47"/>
        <end position="49"/>
    </location>
</feature>
<feature type="strand" evidence="3">
    <location>
        <begin position="50"/>
        <end position="57"/>
    </location>
</feature>
<feature type="strand" evidence="3">
    <location>
        <begin position="59"/>
        <end position="70"/>
    </location>
</feature>
<feature type="helix" evidence="3">
    <location>
        <begin position="74"/>
        <end position="81"/>
    </location>
</feature>
<feature type="helix" evidence="3">
    <location>
        <begin position="83"/>
        <end position="85"/>
    </location>
</feature>
<organism>
    <name type="scientific">Methanosarcina mazei (strain ATCC BAA-159 / DSM 3647 / Goe1 / Go1 / JCM 11833 / OCM 88)</name>
    <name type="common">Methanosarcina frisia</name>
    <dbReference type="NCBI Taxonomy" id="192952"/>
    <lineage>
        <taxon>Archaea</taxon>
        <taxon>Methanobacteriati</taxon>
        <taxon>Methanobacteriota</taxon>
        <taxon>Stenosarchaea group</taxon>
        <taxon>Methanomicrobia</taxon>
        <taxon>Methanosarcinales</taxon>
        <taxon>Methanosarcinaceae</taxon>
        <taxon>Methanosarcina</taxon>
    </lineage>
</organism>
<protein>
    <recommendedName>
        <fullName evidence="1">Small ribosomal subunit protein eS24</fullName>
    </recommendedName>
    <alternativeName>
        <fullName evidence="2">30S ribosomal protein S24e</fullName>
    </alternativeName>
</protein>
<dbReference type="EMBL" id="AE008384">
    <property type="protein sequence ID" value="AAM30295.1"/>
    <property type="molecule type" value="Genomic_DNA"/>
</dbReference>
<dbReference type="RefSeq" id="WP_011032550.1">
    <property type="nucleotide sequence ID" value="NC_003901.1"/>
</dbReference>
<dbReference type="PDB" id="1XN9">
    <property type="method" value="NMR"/>
    <property type="chains" value="A=1-101"/>
</dbReference>
<dbReference type="PDBsum" id="1XN9"/>
<dbReference type="BMRB" id="Q8PZ95"/>
<dbReference type="SMR" id="Q8PZ95"/>
<dbReference type="KEGG" id="mma:MM_0599"/>
<dbReference type="PATRIC" id="fig|192952.21.peg.705"/>
<dbReference type="eggNOG" id="arCOG04182">
    <property type="taxonomic scope" value="Archaea"/>
</dbReference>
<dbReference type="HOGENOM" id="CLU_107248_3_1_2"/>
<dbReference type="EvolutionaryTrace" id="Q8PZ95"/>
<dbReference type="Proteomes" id="UP000000595">
    <property type="component" value="Chromosome"/>
</dbReference>
<dbReference type="GO" id="GO:1990904">
    <property type="term" value="C:ribonucleoprotein complex"/>
    <property type="evidence" value="ECO:0007669"/>
    <property type="project" value="UniProtKB-KW"/>
</dbReference>
<dbReference type="GO" id="GO:0005840">
    <property type="term" value="C:ribosome"/>
    <property type="evidence" value="ECO:0007669"/>
    <property type="project" value="UniProtKB-KW"/>
</dbReference>
<dbReference type="GO" id="GO:0003735">
    <property type="term" value="F:structural constituent of ribosome"/>
    <property type="evidence" value="ECO:0007669"/>
    <property type="project" value="InterPro"/>
</dbReference>
<dbReference type="GO" id="GO:0006412">
    <property type="term" value="P:translation"/>
    <property type="evidence" value="ECO:0007669"/>
    <property type="project" value="UniProtKB-UniRule"/>
</dbReference>
<dbReference type="Gene3D" id="3.30.70.330">
    <property type="match status" value="1"/>
</dbReference>
<dbReference type="HAMAP" id="MF_00545">
    <property type="entry name" value="Ribosomal_eS24"/>
    <property type="match status" value="1"/>
</dbReference>
<dbReference type="InterPro" id="IPR012677">
    <property type="entry name" value="Nucleotide-bd_a/b_plait_sf"/>
</dbReference>
<dbReference type="InterPro" id="IPR001976">
    <property type="entry name" value="Ribosomal_eS24"/>
</dbReference>
<dbReference type="InterPro" id="IPR018098">
    <property type="entry name" value="Ribosomal_eS24_CS"/>
</dbReference>
<dbReference type="InterPro" id="IPR012678">
    <property type="entry name" value="Ribosomal_uL23/eL15/eS24_sf"/>
</dbReference>
<dbReference type="PANTHER" id="PTHR10496">
    <property type="entry name" value="40S RIBOSOMAL PROTEIN S24"/>
    <property type="match status" value="1"/>
</dbReference>
<dbReference type="Pfam" id="PF01282">
    <property type="entry name" value="Ribosomal_S24e"/>
    <property type="match status" value="1"/>
</dbReference>
<dbReference type="SUPFAM" id="SSF54189">
    <property type="entry name" value="Ribosomal proteins S24e, L23 and L15e"/>
    <property type="match status" value="1"/>
</dbReference>
<dbReference type="PROSITE" id="PS00529">
    <property type="entry name" value="RIBOSOMAL_S24E"/>
    <property type="match status" value="1"/>
</dbReference>
<evidence type="ECO:0000255" key="1">
    <source>
        <dbReference type="HAMAP-Rule" id="MF_00545"/>
    </source>
</evidence>
<evidence type="ECO:0000305" key="2"/>
<evidence type="ECO:0007829" key="3">
    <source>
        <dbReference type="PDB" id="1XN9"/>
    </source>
</evidence>
<reference key="1">
    <citation type="journal article" date="2002" name="J. Mol. Microbiol. Biotechnol.">
        <title>The genome of Methanosarcina mazei: evidence for lateral gene transfer between Bacteria and Archaea.</title>
        <authorList>
            <person name="Deppenmeier U."/>
            <person name="Johann A."/>
            <person name="Hartsch T."/>
            <person name="Merkl R."/>
            <person name="Schmitz R.A."/>
            <person name="Martinez-Arias R."/>
            <person name="Henne A."/>
            <person name="Wiezer A."/>
            <person name="Baeumer S."/>
            <person name="Jacobi C."/>
            <person name="Brueggemann H."/>
            <person name="Lienard T."/>
            <person name="Christmann A."/>
            <person name="Boemecke M."/>
            <person name="Steckel S."/>
            <person name="Bhattacharyya A."/>
            <person name="Lykidis A."/>
            <person name="Overbeek R."/>
            <person name="Klenk H.-P."/>
            <person name="Gunsalus R.P."/>
            <person name="Fritz H.-J."/>
            <person name="Gottschalk G."/>
        </authorList>
    </citation>
    <scope>NUCLEOTIDE SEQUENCE [LARGE SCALE GENOMIC DNA]</scope>
    <source>
        <strain>ATCC BAA-159 / DSM 3647 / Goe1 / Go1 / JCM 11833 / OCM 88</strain>
    </source>
</reference>
<accession>Q8PZ95</accession>
<keyword id="KW-0002">3D-structure</keyword>
<keyword id="KW-0687">Ribonucleoprotein</keyword>
<keyword id="KW-0689">Ribosomal protein</keyword>
<proteinExistence type="evidence at protein level"/>
<gene>
    <name evidence="1" type="primary">rps24e</name>
    <name type="ordered locus">MM_0599</name>
</gene>
<comment type="similarity">
    <text evidence="1">Belongs to the eukaryotic ribosomal protein eS24 family.</text>
</comment>